<feature type="chain" id="PRO_0000301579" description="Aspartate carbamoyltransferase catalytic subunit">
    <location>
        <begin position="1"/>
        <end position="307"/>
    </location>
</feature>
<feature type="binding site" evidence="1">
    <location>
        <position position="59"/>
    </location>
    <ligand>
        <name>carbamoyl phosphate</name>
        <dbReference type="ChEBI" id="CHEBI:58228"/>
    </ligand>
</feature>
<feature type="binding site" evidence="1">
    <location>
        <position position="60"/>
    </location>
    <ligand>
        <name>carbamoyl phosphate</name>
        <dbReference type="ChEBI" id="CHEBI:58228"/>
    </ligand>
</feature>
<feature type="binding site" evidence="1">
    <location>
        <position position="87"/>
    </location>
    <ligand>
        <name>L-aspartate</name>
        <dbReference type="ChEBI" id="CHEBI:29991"/>
    </ligand>
</feature>
<feature type="binding site" evidence="1">
    <location>
        <position position="109"/>
    </location>
    <ligand>
        <name>carbamoyl phosphate</name>
        <dbReference type="ChEBI" id="CHEBI:58228"/>
    </ligand>
</feature>
<feature type="binding site" evidence="1">
    <location>
        <position position="137"/>
    </location>
    <ligand>
        <name>carbamoyl phosphate</name>
        <dbReference type="ChEBI" id="CHEBI:58228"/>
    </ligand>
</feature>
<feature type="binding site" evidence="1">
    <location>
        <position position="140"/>
    </location>
    <ligand>
        <name>carbamoyl phosphate</name>
        <dbReference type="ChEBI" id="CHEBI:58228"/>
    </ligand>
</feature>
<feature type="binding site" evidence="1">
    <location>
        <position position="173"/>
    </location>
    <ligand>
        <name>L-aspartate</name>
        <dbReference type="ChEBI" id="CHEBI:29991"/>
    </ligand>
</feature>
<feature type="binding site" evidence="1">
    <location>
        <position position="223"/>
    </location>
    <ligand>
        <name>L-aspartate</name>
        <dbReference type="ChEBI" id="CHEBI:29991"/>
    </ligand>
</feature>
<feature type="binding site" evidence="1">
    <location>
        <position position="266"/>
    </location>
    <ligand>
        <name>carbamoyl phosphate</name>
        <dbReference type="ChEBI" id="CHEBI:58228"/>
    </ligand>
</feature>
<feature type="binding site" evidence="1">
    <location>
        <position position="267"/>
    </location>
    <ligand>
        <name>carbamoyl phosphate</name>
        <dbReference type="ChEBI" id="CHEBI:58228"/>
    </ligand>
</feature>
<organism>
    <name type="scientific">Helicobacter pylori (strain HPAG1)</name>
    <dbReference type="NCBI Taxonomy" id="357544"/>
    <lineage>
        <taxon>Bacteria</taxon>
        <taxon>Pseudomonadati</taxon>
        <taxon>Campylobacterota</taxon>
        <taxon>Epsilonproteobacteria</taxon>
        <taxon>Campylobacterales</taxon>
        <taxon>Helicobacteraceae</taxon>
        <taxon>Helicobacter</taxon>
    </lineage>
</organism>
<evidence type="ECO:0000255" key="1">
    <source>
        <dbReference type="HAMAP-Rule" id="MF_00001"/>
    </source>
</evidence>
<proteinExistence type="inferred from homology"/>
<accession>Q1CUE2</accession>
<gene>
    <name evidence="1" type="primary">pyrB</name>
    <name type="ordered locus">HPAG1_0363</name>
</gene>
<reference key="1">
    <citation type="journal article" date="2006" name="Proc. Natl. Acad. Sci. U.S.A.">
        <title>The complete genome sequence of a chronic atrophic gastritis Helicobacter pylori strain: evolution during disease progression.</title>
        <authorList>
            <person name="Oh J.D."/>
            <person name="Kling-Baeckhed H."/>
            <person name="Giannakis M."/>
            <person name="Xu J."/>
            <person name="Fulton R.S."/>
            <person name="Fulton L.A."/>
            <person name="Cordum H.S."/>
            <person name="Wang C."/>
            <person name="Elliott G."/>
            <person name="Edwards J."/>
            <person name="Mardis E.R."/>
            <person name="Engstrand L.G."/>
            <person name="Gordon J.I."/>
        </authorList>
    </citation>
    <scope>NUCLEOTIDE SEQUENCE [LARGE SCALE GENOMIC DNA]</scope>
    <source>
        <strain>HPAG1</strain>
    </source>
</reference>
<keyword id="KW-0665">Pyrimidine biosynthesis</keyword>
<keyword id="KW-0808">Transferase</keyword>
<dbReference type="EC" id="2.1.3.2" evidence="1"/>
<dbReference type="EMBL" id="CP000241">
    <property type="protein sequence ID" value="ABF84430.1"/>
    <property type="molecule type" value="Genomic_DNA"/>
</dbReference>
<dbReference type="RefSeq" id="WP_001124577.1">
    <property type="nucleotide sequence ID" value="NC_008086.1"/>
</dbReference>
<dbReference type="SMR" id="Q1CUE2"/>
<dbReference type="KEGG" id="hpa:HPAG1_0363"/>
<dbReference type="HOGENOM" id="CLU_043846_2_0_7"/>
<dbReference type="UniPathway" id="UPA00070">
    <property type="reaction ID" value="UER00116"/>
</dbReference>
<dbReference type="GO" id="GO:0005829">
    <property type="term" value="C:cytosol"/>
    <property type="evidence" value="ECO:0007669"/>
    <property type="project" value="TreeGrafter"/>
</dbReference>
<dbReference type="GO" id="GO:0016597">
    <property type="term" value="F:amino acid binding"/>
    <property type="evidence" value="ECO:0007669"/>
    <property type="project" value="InterPro"/>
</dbReference>
<dbReference type="GO" id="GO:0004070">
    <property type="term" value="F:aspartate carbamoyltransferase activity"/>
    <property type="evidence" value="ECO:0007669"/>
    <property type="project" value="UniProtKB-UniRule"/>
</dbReference>
<dbReference type="GO" id="GO:0006207">
    <property type="term" value="P:'de novo' pyrimidine nucleobase biosynthetic process"/>
    <property type="evidence" value="ECO:0007669"/>
    <property type="project" value="InterPro"/>
</dbReference>
<dbReference type="GO" id="GO:0044205">
    <property type="term" value="P:'de novo' UMP biosynthetic process"/>
    <property type="evidence" value="ECO:0007669"/>
    <property type="project" value="UniProtKB-UniRule"/>
</dbReference>
<dbReference type="GO" id="GO:0006520">
    <property type="term" value="P:amino acid metabolic process"/>
    <property type="evidence" value="ECO:0007669"/>
    <property type="project" value="InterPro"/>
</dbReference>
<dbReference type="FunFam" id="3.40.50.1370:FF:000037">
    <property type="entry name" value="Aspartate carbamoyltransferase"/>
    <property type="match status" value="1"/>
</dbReference>
<dbReference type="Gene3D" id="3.40.50.1370">
    <property type="entry name" value="Aspartate/ornithine carbamoyltransferase"/>
    <property type="match status" value="2"/>
</dbReference>
<dbReference type="HAMAP" id="MF_00001">
    <property type="entry name" value="Asp_carb_tr"/>
    <property type="match status" value="1"/>
</dbReference>
<dbReference type="InterPro" id="IPR006132">
    <property type="entry name" value="Asp/Orn_carbamoyltranf_P-bd"/>
</dbReference>
<dbReference type="InterPro" id="IPR006130">
    <property type="entry name" value="Asp/Orn_carbamoylTrfase"/>
</dbReference>
<dbReference type="InterPro" id="IPR036901">
    <property type="entry name" value="Asp/Orn_carbamoylTrfase_sf"/>
</dbReference>
<dbReference type="InterPro" id="IPR002082">
    <property type="entry name" value="Asp_carbamoyltransf"/>
</dbReference>
<dbReference type="InterPro" id="IPR006131">
    <property type="entry name" value="Asp_carbamoyltransf_Asp/Orn-bd"/>
</dbReference>
<dbReference type="NCBIfam" id="TIGR00670">
    <property type="entry name" value="asp_carb_tr"/>
    <property type="match status" value="1"/>
</dbReference>
<dbReference type="NCBIfam" id="NF002032">
    <property type="entry name" value="PRK00856.1"/>
    <property type="match status" value="1"/>
</dbReference>
<dbReference type="PANTHER" id="PTHR45753:SF6">
    <property type="entry name" value="ASPARTATE CARBAMOYLTRANSFERASE"/>
    <property type="match status" value="1"/>
</dbReference>
<dbReference type="PANTHER" id="PTHR45753">
    <property type="entry name" value="ORNITHINE CARBAMOYLTRANSFERASE, MITOCHONDRIAL"/>
    <property type="match status" value="1"/>
</dbReference>
<dbReference type="Pfam" id="PF00185">
    <property type="entry name" value="OTCace"/>
    <property type="match status" value="1"/>
</dbReference>
<dbReference type="Pfam" id="PF02729">
    <property type="entry name" value="OTCace_N"/>
    <property type="match status" value="1"/>
</dbReference>
<dbReference type="PRINTS" id="PR00100">
    <property type="entry name" value="AOTCASE"/>
</dbReference>
<dbReference type="PRINTS" id="PR00101">
    <property type="entry name" value="ATCASE"/>
</dbReference>
<dbReference type="SUPFAM" id="SSF53671">
    <property type="entry name" value="Aspartate/ornithine carbamoyltransferase"/>
    <property type="match status" value="1"/>
</dbReference>
<dbReference type="PROSITE" id="PS00097">
    <property type="entry name" value="CARBAMOYLTRANSFERASE"/>
    <property type="match status" value="1"/>
</dbReference>
<sequence>MPKKCRHLLQTSDLSLDEIKLLLKKASVYANDFNAVSLETKEKMHNKIIVALFFENSTRTVSSFEIASLRLGAKIVKLNMQTSSASKGETLTDTFKNIHAMQPDAIITRHAFSSAPFKLAEFSQCPLINAGSGVSAHPTQALLDLLTLYQHFGSLENLKGKKIAFIGDVKNSRVANSNIKLLQRLGLEIMLCAPSSMLPTTSLKTTHNIEEAIAFADILMSLRTQTERHNAPIFASLKDYGNAYCITQQRLKAHAKNKEVIILHPGPVHRDIDIESAVLEDERSKVLEQVKNGVAMRMAVLEFLLLD</sequence>
<name>PYRB_HELPH</name>
<protein>
    <recommendedName>
        <fullName evidence="1">Aspartate carbamoyltransferase catalytic subunit</fullName>
        <ecNumber evidence="1">2.1.3.2</ecNumber>
    </recommendedName>
    <alternativeName>
        <fullName evidence="1">Aspartate transcarbamylase</fullName>
        <shortName evidence="1">ATCase</shortName>
    </alternativeName>
</protein>
<comment type="function">
    <text evidence="1">Catalyzes the condensation of carbamoyl phosphate and aspartate to form carbamoyl aspartate and inorganic phosphate, the committed step in the de novo pyrimidine nucleotide biosynthesis pathway.</text>
</comment>
<comment type="catalytic activity">
    <reaction evidence="1">
        <text>carbamoyl phosphate + L-aspartate = N-carbamoyl-L-aspartate + phosphate + H(+)</text>
        <dbReference type="Rhea" id="RHEA:20013"/>
        <dbReference type="ChEBI" id="CHEBI:15378"/>
        <dbReference type="ChEBI" id="CHEBI:29991"/>
        <dbReference type="ChEBI" id="CHEBI:32814"/>
        <dbReference type="ChEBI" id="CHEBI:43474"/>
        <dbReference type="ChEBI" id="CHEBI:58228"/>
        <dbReference type="EC" id="2.1.3.2"/>
    </reaction>
</comment>
<comment type="pathway">
    <text evidence="1">Pyrimidine metabolism; UMP biosynthesis via de novo pathway; (S)-dihydroorotate from bicarbonate: step 2/3.</text>
</comment>
<comment type="subunit">
    <text evidence="1">Heterododecamer (2C3:3R2) of six catalytic PyrB chains organized as two trimers (C3), and six regulatory PyrI chains organized as three dimers (R2).</text>
</comment>
<comment type="similarity">
    <text evidence="1">Belongs to the aspartate/ornithine carbamoyltransferase superfamily. ATCase family.</text>
</comment>